<accession>A1S8D4</accession>
<protein>
    <recommendedName>
        <fullName evidence="1">1-deoxy-D-xylulose-5-phosphate synthase</fullName>
        <ecNumber evidence="1">2.2.1.7</ecNumber>
    </recommendedName>
    <alternativeName>
        <fullName evidence="1">1-deoxyxylulose-5-phosphate synthase</fullName>
        <shortName evidence="1">DXP synthase</shortName>
        <shortName evidence="1">DXPS</shortName>
    </alternativeName>
</protein>
<reference key="1">
    <citation type="submission" date="2006-12" db="EMBL/GenBank/DDBJ databases">
        <title>Complete sequence of Shewanella amazonensis SB2B.</title>
        <authorList>
            <consortium name="US DOE Joint Genome Institute"/>
            <person name="Copeland A."/>
            <person name="Lucas S."/>
            <person name="Lapidus A."/>
            <person name="Barry K."/>
            <person name="Detter J.C."/>
            <person name="Glavina del Rio T."/>
            <person name="Hammon N."/>
            <person name="Israni S."/>
            <person name="Dalin E."/>
            <person name="Tice H."/>
            <person name="Pitluck S."/>
            <person name="Munk A.C."/>
            <person name="Brettin T."/>
            <person name="Bruce D."/>
            <person name="Han C."/>
            <person name="Tapia R."/>
            <person name="Gilna P."/>
            <person name="Schmutz J."/>
            <person name="Larimer F."/>
            <person name="Land M."/>
            <person name="Hauser L."/>
            <person name="Kyrpides N."/>
            <person name="Mikhailova N."/>
            <person name="Fredrickson J."/>
            <person name="Richardson P."/>
        </authorList>
    </citation>
    <scope>NUCLEOTIDE SEQUENCE [LARGE SCALE GENOMIC DNA]</scope>
    <source>
        <strain>ATCC BAA-1098 / SB2B</strain>
    </source>
</reference>
<feature type="chain" id="PRO_1000019072" description="1-deoxy-D-xylulose-5-phosphate synthase">
    <location>
        <begin position="1"/>
        <end position="622"/>
    </location>
</feature>
<feature type="binding site" evidence="1">
    <location>
        <position position="80"/>
    </location>
    <ligand>
        <name>thiamine diphosphate</name>
        <dbReference type="ChEBI" id="CHEBI:58937"/>
    </ligand>
</feature>
<feature type="binding site" evidence="1">
    <location>
        <begin position="121"/>
        <end position="123"/>
    </location>
    <ligand>
        <name>thiamine diphosphate</name>
        <dbReference type="ChEBI" id="CHEBI:58937"/>
    </ligand>
</feature>
<feature type="binding site" evidence="1">
    <location>
        <position position="152"/>
    </location>
    <ligand>
        <name>Mg(2+)</name>
        <dbReference type="ChEBI" id="CHEBI:18420"/>
    </ligand>
</feature>
<feature type="binding site" evidence="1">
    <location>
        <begin position="153"/>
        <end position="154"/>
    </location>
    <ligand>
        <name>thiamine diphosphate</name>
        <dbReference type="ChEBI" id="CHEBI:58937"/>
    </ligand>
</feature>
<feature type="binding site" evidence="1">
    <location>
        <position position="181"/>
    </location>
    <ligand>
        <name>Mg(2+)</name>
        <dbReference type="ChEBI" id="CHEBI:18420"/>
    </ligand>
</feature>
<feature type="binding site" evidence="1">
    <location>
        <position position="181"/>
    </location>
    <ligand>
        <name>thiamine diphosphate</name>
        <dbReference type="ChEBI" id="CHEBI:58937"/>
    </ligand>
</feature>
<feature type="binding site" evidence="1">
    <location>
        <position position="288"/>
    </location>
    <ligand>
        <name>thiamine diphosphate</name>
        <dbReference type="ChEBI" id="CHEBI:58937"/>
    </ligand>
</feature>
<feature type="binding site" evidence="1">
    <location>
        <position position="370"/>
    </location>
    <ligand>
        <name>thiamine diphosphate</name>
        <dbReference type="ChEBI" id="CHEBI:58937"/>
    </ligand>
</feature>
<proteinExistence type="inferred from homology"/>
<name>DXS_SHEAM</name>
<organism>
    <name type="scientific">Shewanella amazonensis (strain ATCC BAA-1098 / SB2B)</name>
    <dbReference type="NCBI Taxonomy" id="326297"/>
    <lineage>
        <taxon>Bacteria</taxon>
        <taxon>Pseudomonadati</taxon>
        <taxon>Pseudomonadota</taxon>
        <taxon>Gammaproteobacteria</taxon>
        <taxon>Alteromonadales</taxon>
        <taxon>Shewanellaceae</taxon>
        <taxon>Shewanella</taxon>
    </lineage>
</organism>
<comment type="function">
    <text evidence="1">Catalyzes the acyloin condensation reaction between C atoms 2 and 3 of pyruvate and glyceraldehyde 3-phosphate to yield 1-deoxy-D-xylulose-5-phosphate (DXP).</text>
</comment>
<comment type="catalytic activity">
    <reaction evidence="1">
        <text>D-glyceraldehyde 3-phosphate + pyruvate + H(+) = 1-deoxy-D-xylulose 5-phosphate + CO2</text>
        <dbReference type="Rhea" id="RHEA:12605"/>
        <dbReference type="ChEBI" id="CHEBI:15361"/>
        <dbReference type="ChEBI" id="CHEBI:15378"/>
        <dbReference type="ChEBI" id="CHEBI:16526"/>
        <dbReference type="ChEBI" id="CHEBI:57792"/>
        <dbReference type="ChEBI" id="CHEBI:59776"/>
        <dbReference type="EC" id="2.2.1.7"/>
    </reaction>
</comment>
<comment type="cofactor">
    <cofactor evidence="1">
        <name>Mg(2+)</name>
        <dbReference type="ChEBI" id="CHEBI:18420"/>
    </cofactor>
    <text evidence="1">Binds 1 Mg(2+) ion per subunit.</text>
</comment>
<comment type="cofactor">
    <cofactor evidence="1">
        <name>thiamine diphosphate</name>
        <dbReference type="ChEBI" id="CHEBI:58937"/>
    </cofactor>
    <text evidence="1">Binds 1 thiamine pyrophosphate per subunit.</text>
</comment>
<comment type="pathway">
    <text evidence="1">Metabolic intermediate biosynthesis; 1-deoxy-D-xylulose 5-phosphate biosynthesis; 1-deoxy-D-xylulose 5-phosphate from D-glyceraldehyde 3-phosphate and pyruvate: step 1/1.</text>
</comment>
<comment type="subunit">
    <text evidence="1">Homodimer.</text>
</comment>
<comment type="similarity">
    <text evidence="1">Belongs to the transketolase family. DXPS subfamily.</text>
</comment>
<evidence type="ECO:0000255" key="1">
    <source>
        <dbReference type="HAMAP-Rule" id="MF_00315"/>
    </source>
</evidence>
<gene>
    <name evidence="1" type="primary">dxs</name>
    <name type="ordered locus">Sama_2436</name>
</gene>
<sequence length="622" mass="67799">MSLDISNYPLLALASTPEELRQLPQSALKQLSDELRQFLLTSVGISSGHFASGLGTVELTVALHYVYNTPFDRLIWDVGHQAYPHKILTGRRDKMHTIRQKNGLHPFPWREESQYDTFSVGHSSTSISAALGMAVTAEKEALGRKVVAVIGDGAITGGMAFEALNHAGDLHKDMLVVLNDNEMSISENVGALNNHLAKLMSGRLYTTIREGGKKVLKGMPVIKEMAKRTEEHLKGMVVPGTLFEELGFNYIGPIDGHDVNGLVETLSNMRDLKGPQFLHIMTKKGKGYEPAEKDPIGWHAVPKFDPTQFRKPATKPGLPTFSQVFGKWLCDIAAKDEKVLAITPAMREGSGMVEFSQRFPQQYFDAAIAEQHAVTLGAGFACEGYKAVVAIYSSFLQRGYDQLIHDVALQRLPVLFAIDRGGIVGADGATHQGAFDLSYMRCIPNMVIMAPSDENECRQMFYTGYCYNEGPSAVRYPRGSATGAEQIEEMTALPIGKGVMRRQGQKIAILNFGTTLAAALTAAESLNATVADMRFVKPLDEALLLELAASHDVLVTVEENAIMGGAGSGVLEFLASKNRLKPLLQIGIPDEFIKHGGPEEILSELGLDAAGIEGQIRAFIER</sequence>
<dbReference type="EC" id="2.2.1.7" evidence="1"/>
<dbReference type="EMBL" id="CP000507">
    <property type="protein sequence ID" value="ABM00641.1"/>
    <property type="molecule type" value="Genomic_DNA"/>
</dbReference>
<dbReference type="RefSeq" id="WP_011760547.1">
    <property type="nucleotide sequence ID" value="NC_008700.1"/>
</dbReference>
<dbReference type="SMR" id="A1S8D4"/>
<dbReference type="STRING" id="326297.Sama_2436"/>
<dbReference type="KEGG" id="saz:Sama_2436"/>
<dbReference type="eggNOG" id="COG1154">
    <property type="taxonomic scope" value="Bacteria"/>
</dbReference>
<dbReference type="HOGENOM" id="CLU_009227_1_4_6"/>
<dbReference type="OrthoDB" id="9803371at2"/>
<dbReference type="UniPathway" id="UPA00064">
    <property type="reaction ID" value="UER00091"/>
</dbReference>
<dbReference type="Proteomes" id="UP000009175">
    <property type="component" value="Chromosome"/>
</dbReference>
<dbReference type="GO" id="GO:0005829">
    <property type="term" value="C:cytosol"/>
    <property type="evidence" value="ECO:0007669"/>
    <property type="project" value="TreeGrafter"/>
</dbReference>
<dbReference type="GO" id="GO:0008661">
    <property type="term" value="F:1-deoxy-D-xylulose-5-phosphate synthase activity"/>
    <property type="evidence" value="ECO:0007669"/>
    <property type="project" value="UniProtKB-UniRule"/>
</dbReference>
<dbReference type="GO" id="GO:0000287">
    <property type="term" value="F:magnesium ion binding"/>
    <property type="evidence" value="ECO:0007669"/>
    <property type="project" value="UniProtKB-UniRule"/>
</dbReference>
<dbReference type="GO" id="GO:0030976">
    <property type="term" value="F:thiamine pyrophosphate binding"/>
    <property type="evidence" value="ECO:0007669"/>
    <property type="project" value="UniProtKB-UniRule"/>
</dbReference>
<dbReference type="GO" id="GO:0052865">
    <property type="term" value="P:1-deoxy-D-xylulose 5-phosphate biosynthetic process"/>
    <property type="evidence" value="ECO:0007669"/>
    <property type="project" value="UniProtKB-UniPathway"/>
</dbReference>
<dbReference type="GO" id="GO:0019288">
    <property type="term" value="P:isopentenyl diphosphate biosynthetic process, methylerythritol 4-phosphate pathway"/>
    <property type="evidence" value="ECO:0007669"/>
    <property type="project" value="TreeGrafter"/>
</dbReference>
<dbReference type="GO" id="GO:0016114">
    <property type="term" value="P:terpenoid biosynthetic process"/>
    <property type="evidence" value="ECO:0007669"/>
    <property type="project" value="UniProtKB-UniRule"/>
</dbReference>
<dbReference type="GO" id="GO:0009228">
    <property type="term" value="P:thiamine biosynthetic process"/>
    <property type="evidence" value="ECO:0007669"/>
    <property type="project" value="UniProtKB-UniRule"/>
</dbReference>
<dbReference type="CDD" id="cd02007">
    <property type="entry name" value="TPP_DXS"/>
    <property type="match status" value="1"/>
</dbReference>
<dbReference type="CDD" id="cd07033">
    <property type="entry name" value="TPP_PYR_DXS_TK_like"/>
    <property type="match status" value="1"/>
</dbReference>
<dbReference type="FunFam" id="3.40.50.920:FF:000002">
    <property type="entry name" value="1-deoxy-D-xylulose-5-phosphate synthase"/>
    <property type="match status" value="1"/>
</dbReference>
<dbReference type="FunFam" id="3.40.50.970:FF:000005">
    <property type="entry name" value="1-deoxy-D-xylulose-5-phosphate synthase"/>
    <property type="match status" value="1"/>
</dbReference>
<dbReference type="Gene3D" id="3.40.50.920">
    <property type="match status" value="1"/>
</dbReference>
<dbReference type="Gene3D" id="3.40.50.970">
    <property type="match status" value="2"/>
</dbReference>
<dbReference type="HAMAP" id="MF_00315">
    <property type="entry name" value="DXP_synth"/>
    <property type="match status" value="1"/>
</dbReference>
<dbReference type="InterPro" id="IPR005477">
    <property type="entry name" value="Dxylulose-5-P_synthase"/>
</dbReference>
<dbReference type="InterPro" id="IPR029061">
    <property type="entry name" value="THDP-binding"/>
</dbReference>
<dbReference type="InterPro" id="IPR009014">
    <property type="entry name" value="Transketo_C/PFOR_II"/>
</dbReference>
<dbReference type="InterPro" id="IPR005475">
    <property type="entry name" value="Transketolase-like_Pyr-bd"/>
</dbReference>
<dbReference type="InterPro" id="IPR020826">
    <property type="entry name" value="Transketolase_BS"/>
</dbReference>
<dbReference type="InterPro" id="IPR033248">
    <property type="entry name" value="Transketolase_C"/>
</dbReference>
<dbReference type="InterPro" id="IPR049557">
    <property type="entry name" value="Transketolase_CS"/>
</dbReference>
<dbReference type="NCBIfam" id="TIGR00204">
    <property type="entry name" value="dxs"/>
    <property type="match status" value="1"/>
</dbReference>
<dbReference type="NCBIfam" id="NF003933">
    <property type="entry name" value="PRK05444.2-2"/>
    <property type="match status" value="1"/>
</dbReference>
<dbReference type="PANTHER" id="PTHR43322">
    <property type="entry name" value="1-D-DEOXYXYLULOSE 5-PHOSPHATE SYNTHASE-RELATED"/>
    <property type="match status" value="1"/>
</dbReference>
<dbReference type="PANTHER" id="PTHR43322:SF5">
    <property type="entry name" value="1-DEOXY-D-XYLULOSE-5-PHOSPHATE SYNTHASE, CHLOROPLASTIC"/>
    <property type="match status" value="1"/>
</dbReference>
<dbReference type="Pfam" id="PF13292">
    <property type="entry name" value="DXP_synthase_N"/>
    <property type="match status" value="1"/>
</dbReference>
<dbReference type="Pfam" id="PF02779">
    <property type="entry name" value="Transket_pyr"/>
    <property type="match status" value="1"/>
</dbReference>
<dbReference type="Pfam" id="PF02780">
    <property type="entry name" value="Transketolase_C"/>
    <property type="match status" value="1"/>
</dbReference>
<dbReference type="SMART" id="SM00861">
    <property type="entry name" value="Transket_pyr"/>
    <property type="match status" value="1"/>
</dbReference>
<dbReference type="SUPFAM" id="SSF52518">
    <property type="entry name" value="Thiamin diphosphate-binding fold (THDP-binding)"/>
    <property type="match status" value="2"/>
</dbReference>
<dbReference type="SUPFAM" id="SSF52922">
    <property type="entry name" value="TK C-terminal domain-like"/>
    <property type="match status" value="1"/>
</dbReference>
<dbReference type="PROSITE" id="PS00801">
    <property type="entry name" value="TRANSKETOLASE_1"/>
    <property type="match status" value="1"/>
</dbReference>
<dbReference type="PROSITE" id="PS00802">
    <property type="entry name" value="TRANSKETOLASE_2"/>
    <property type="match status" value="1"/>
</dbReference>
<keyword id="KW-0414">Isoprene biosynthesis</keyword>
<keyword id="KW-0460">Magnesium</keyword>
<keyword id="KW-0479">Metal-binding</keyword>
<keyword id="KW-1185">Reference proteome</keyword>
<keyword id="KW-0784">Thiamine biosynthesis</keyword>
<keyword id="KW-0786">Thiamine pyrophosphate</keyword>
<keyword id="KW-0808">Transferase</keyword>